<organism>
    <name type="scientific">Sulfurisphaera tokodaii (strain DSM 16993 / JCM 10545 / NBRC 100140 / 7)</name>
    <name type="common">Sulfolobus tokodaii</name>
    <dbReference type="NCBI Taxonomy" id="273063"/>
    <lineage>
        <taxon>Archaea</taxon>
        <taxon>Thermoproteota</taxon>
        <taxon>Thermoprotei</taxon>
        <taxon>Sulfolobales</taxon>
        <taxon>Sulfolobaceae</taxon>
        <taxon>Sulfurisphaera</taxon>
    </lineage>
</organism>
<reference key="1">
    <citation type="journal article" date="2001" name="DNA Res.">
        <title>Complete genome sequence of an aerobic thermoacidophilic Crenarchaeon, Sulfolobus tokodaii strain7.</title>
        <authorList>
            <person name="Kawarabayasi Y."/>
            <person name="Hino Y."/>
            <person name="Horikawa H."/>
            <person name="Jin-no K."/>
            <person name="Takahashi M."/>
            <person name="Sekine M."/>
            <person name="Baba S."/>
            <person name="Ankai A."/>
            <person name="Kosugi H."/>
            <person name="Hosoyama A."/>
            <person name="Fukui S."/>
            <person name="Nagai Y."/>
            <person name="Nishijima K."/>
            <person name="Otsuka R."/>
            <person name="Nakazawa H."/>
            <person name="Takamiya M."/>
            <person name="Kato Y."/>
            <person name="Yoshizawa T."/>
            <person name="Tanaka T."/>
            <person name="Kudoh Y."/>
            <person name="Yamazaki J."/>
            <person name="Kushida N."/>
            <person name="Oguchi A."/>
            <person name="Aoki K."/>
            <person name="Masuda S."/>
            <person name="Yanagii M."/>
            <person name="Nishimura M."/>
            <person name="Yamagishi A."/>
            <person name="Oshima T."/>
            <person name="Kikuchi H."/>
        </authorList>
    </citation>
    <scope>NUCLEOTIDE SEQUENCE [LARGE SCALE GENOMIC DNA]</scope>
    <source>
        <strain>DSM 16993 / JCM 10545 / NBRC 100140 / 7</strain>
    </source>
</reference>
<keyword id="KW-0378">Hydrolase</keyword>
<keyword id="KW-1185">Reference proteome</keyword>
<proteinExistence type="inferred from homology"/>
<sequence length="227" mass="25492">MPQLRWLGHAAVELNLGGKHIVIDPMIKDNPVSPVKLNYFENNLNLIIVTHDHYDHLGDTVELMKINPKAYLFATYDLENYLATQFNIPWERMIPANVGGYIDFDGIKLALTKAVHSSEHSDPTGAIVSGEGVTIYHAGDTGLFEDMKLIGEIFKPDYVLLPIGGRFTMDPYQAAIAVEMLKPKKYAIPIHYNTWDLIKVDPNDFVKEVSKRGYKALVLQPGQSVEL</sequence>
<name>Y1418_SULTO</name>
<gene>
    <name type="ordered locus">STK_14180</name>
</gene>
<dbReference type="EMBL" id="BA000023">
    <property type="protein sequence ID" value="BAB66485.1"/>
    <property type="molecule type" value="Genomic_DNA"/>
</dbReference>
<dbReference type="RefSeq" id="WP_010979463.1">
    <property type="nucleotide sequence ID" value="NC_003106.2"/>
</dbReference>
<dbReference type="SMR" id="Q971D5"/>
<dbReference type="STRING" id="273063.STK_14180"/>
<dbReference type="KEGG" id="sto:STK_14180"/>
<dbReference type="PATRIC" id="fig|273063.9.peg.1617"/>
<dbReference type="eggNOG" id="arCOG00497">
    <property type="taxonomic scope" value="Archaea"/>
</dbReference>
<dbReference type="OrthoDB" id="28313at2157"/>
<dbReference type="Proteomes" id="UP000001015">
    <property type="component" value="Chromosome"/>
</dbReference>
<dbReference type="GO" id="GO:0016787">
    <property type="term" value="F:hydrolase activity"/>
    <property type="evidence" value="ECO:0007669"/>
    <property type="project" value="UniProtKB-UniRule"/>
</dbReference>
<dbReference type="Gene3D" id="3.60.15.10">
    <property type="entry name" value="Ribonuclease Z/Hydroxyacylglutathione hydrolase-like"/>
    <property type="match status" value="1"/>
</dbReference>
<dbReference type="HAMAP" id="MF_00457">
    <property type="entry name" value="UPF0173"/>
    <property type="match status" value="1"/>
</dbReference>
<dbReference type="InterPro" id="IPR001279">
    <property type="entry name" value="Metallo-B-lactamas"/>
</dbReference>
<dbReference type="InterPro" id="IPR036866">
    <property type="entry name" value="RibonucZ/Hydroxyglut_hydro"/>
</dbReference>
<dbReference type="InterPro" id="IPR022877">
    <property type="entry name" value="UPF0173"/>
</dbReference>
<dbReference type="InterPro" id="IPR050114">
    <property type="entry name" value="UPF0173_UPF0282_UlaG_hydrolase"/>
</dbReference>
<dbReference type="NCBIfam" id="NF001911">
    <property type="entry name" value="PRK00685.1"/>
    <property type="match status" value="1"/>
</dbReference>
<dbReference type="PANTHER" id="PTHR43546:SF3">
    <property type="entry name" value="UPF0173 METAL-DEPENDENT HYDROLASE MJ1163"/>
    <property type="match status" value="1"/>
</dbReference>
<dbReference type="PANTHER" id="PTHR43546">
    <property type="entry name" value="UPF0173 METAL-DEPENDENT HYDROLASE MJ1163-RELATED"/>
    <property type="match status" value="1"/>
</dbReference>
<dbReference type="Pfam" id="PF12706">
    <property type="entry name" value="Lactamase_B_2"/>
    <property type="match status" value="1"/>
</dbReference>
<dbReference type="SMART" id="SM00849">
    <property type="entry name" value="Lactamase_B"/>
    <property type="match status" value="1"/>
</dbReference>
<dbReference type="SUPFAM" id="SSF56281">
    <property type="entry name" value="Metallo-hydrolase/oxidoreductase"/>
    <property type="match status" value="1"/>
</dbReference>
<accession>Q971D5</accession>
<comment type="similarity">
    <text evidence="1">Belongs to the UPF0173 family.</text>
</comment>
<feature type="chain" id="PRO_0000156406" description="UPF0173 metal-dependent hydrolase STK_14180">
    <location>
        <begin position="1"/>
        <end position="227"/>
    </location>
</feature>
<protein>
    <recommendedName>
        <fullName evidence="1">UPF0173 metal-dependent hydrolase STK_14180</fullName>
    </recommendedName>
</protein>
<evidence type="ECO:0000255" key="1">
    <source>
        <dbReference type="HAMAP-Rule" id="MF_00457"/>
    </source>
</evidence>